<organism>
    <name type="scientific">Deinococcus radiodurans (strain ATCC 13939 / DSM 20539 / JCM 16871 / CCUG 27074 / LMG 4051 / NBRC 15346 / NCIMB 9279 / VKM B-1422 / R1)</name>
    <dbReference type="NCBI Taxonomy" id="243230"/>
    <lineage>
        <taxon>Bacteria</taxon>
        <taxon>Thermotogati</taxon>
        <taxon>Deinococcota</taxon>
        <taxon>Deinococci</taxon>
        <taxon>Deinococcales</taxon>
        <taxon>Deinococcaceae</taxon>
        <taxon>Deinococcus</taxon>
    </lineage>
</organism>
<sequence>MALRHKSAQKRHRQSLKRRAINRAKKSTIKTFSKKALVAAQGGAEDATAMQQRAESLIDKAAKGSTLHKNAAARKKSRLAKAINKAKAAQQA</sequence>
<accession>Q9RUS3</accession>
<keyword id="KW-1185">Reference proteome</keyword>
<keyword id="KW-0687">Ribonucleoprotein</keyword>
<keyword id="KW-0689">Ribosomal protein</keyword>
<keyword id="KW-0694">RNA-binding</keyword>
<keyword id="KW-0699">rRNA-binding</keyword>
<evidence type="ECO:0000255" key="1">
    <source>
        <dbReference type="HAMAP-Rule" id="MF_00500"/>
    </source>
</evidence>
<evidence type="ECO:0000256" key="2">
    <source>
        <dbReference type="SAM" id="MobiDB-lite"/>
    </source>
</evidence>
<evidence type="ECO:0000305" key="3"/>
<reference key="1">
    <citation type="journal article" date="1999" name="Science">
        <title>Genome sequence of the radioresistant bacterium Deinococcus radiodurans R1.</title>
        <authorList>
            <person name="White O."/>
            <person name="Eisen J.A."/>
            <person name="Heidelberg J.F."/>
            <person name="Hickey E.K."/>
            <person name="Peterson J.D."/>
            <person name="Dodson R.J."/>
            <person name="Haft D.H."/>
            <person name="Gwinn M.L."/>
            <person name="Nelson W.C."/>
            <person name="Richardson D.L."/>
            <person name="Moffat K.S."/>
            <person name="Qin H."/>
            <person name="Jiang L."/>
            <person name="Pamphile W."/>
            <person name="Crosby M."/>
            <person name="Shen M."/>
            <person name="Vamathevan J.J."/>
            <person name="Lam P."/>
            <person name="McDonald L.A."/>
            <person name="Utterback T.R."/>
            <person name="Zalewski C."/>
            <person name="Makarova K.S."/>
            <person name="Aravind L."/>
            <person name="Daly M.J."/>
            <person name="Minton K.W."/>
            <person name="Fleischmann R.D."/>
            <person name="Ketchum K.A."/>
            <person name="Nelson K.E."/>
            <person name="Salzberg S.L."/>
            <person name="Smith H.O."/>
            <person name="Venter J.C."/>
            <person name="Fraser C.M."/>
        </authorList>
    </citation>
    <scope>NUCLEOTIDE SEQUENCE [LARGE SCALE GENOMIC DNA]</scope>
    <source>
        <strain>ATCC 13939 / DSM 20539 / JCM 16871 / CCUG 27074 / LMG 4051 / NBRC 15346 / NCIMB 9279 / VKM B-1422 / R1</strain>
    </source>
</reference>
<dbReference type="EMBL" id="AE000513">
    <property type="protein sequence ID" value="AAF10881.1"/>
    <property type="molecule type" value="Genomic_DNA"/>
</dbReference>
<dbReference type="PIR" id="A75410">
    <property type="entry name" value="A75410"/>
</dbReference>
<dbReference type="RefSeq" id="NP_295033.1">
    <property type="nucleotide sequence ID" value="NC_001263.1"/>
</dbReference>
<dbReference type="RefSeq" id="WP_010887951.1">
    <property type="nucleotide sequence ID" value="NC_001263.1"/>
</dbReference>
<dbReference type="SMR" id="Q9RUS3"/>
<dbReference type="FunCoup" id="Q9RUS3">
    <property type="interactions" value="333"/>
</dbReference>
<dbReference type="STRING" id="243230.DR_1309"/>
<dbReference type="PaxDb" id="243230-DR_1309"/>
<dbReference type="EnsemblBacteria" id="AAF10881">
    <property type="protein sequence ID" value="AAF10881"/>
    <property type="gene ID" value="DR_1309"/>
</dbReference>
<dbReference type="GeneID" id="69517556"/>
<dbReference type="KEGG" id="dra:DR_1309"/>
<dbReference type="PATRIC" id="fig|243230.17.peg.1503"/>
<dbReference type="eggNOG" id="COG0268">
    <property type="taxonomic scope" value="Bacteria"/>
</dbReference>
<dbReference type="HOGENOM" id="CLU_160655_3_1_0"/>
<dbReference type="InParanoid" id="Q9RUS3"/>
<dbReference type="OrthoDB" id="9807974at2"/>
<dbReference type="Proteomes" id="UP000002524">
    <property type="component" value="Chromosome 1"/>
</dbReference>
<dbReference type="GO" id="GO:0015935">
    <property type="term" value="C:small ribosomal subunit"/>
    <property type="evidence" value="ECO:0000318"/>
    <property type="project" value="GO_Central"/>
</dbReference>
<dbReference type="GO" id="GO:0070181">
    <property type="term" value="F:small ribosomal subunit rRNA binding"/>
    <property type="evidence" value="ECO:0000318"/>
    <property type="project" value="GO_Central"/>
</dbReference>
<dbReference type="GO" id="GO:0003735">
    <property type="term" value="F:structural constituent of ribosome"/>
    <property type="evidence" value="ECO:0007669"/>
    <property type="project" value="InterPro"/>
</dbReference>
<dbReference type="GO" id="GO:0006412">
    <property type="term" value="P:translation"/>
    <property type="evidence" value="ECO:0007669"/>
    <property type="project" value="UniProtKB-UniRule"/>
</dbReference>
<dbReference type="FunFam" id="1.20.58.110:FF:000008">
    <property type="entry name" value="30S ribosomal protein S20"/>
    <property type="match status" value="1"/>
</dbReference>
<dbReference type="Gene3D" id="1.20.58.110">
    <property type="entry name" value="Ribosomal protein S20"/>
    <property type="match status" value="1"/>
</dbReference>
<dbReference type="HAMAP" id="MF_00500">
    <property type="entry name" value="Ribosomal_bS20"/>
    <property type="match status" value="1"/>
</dbReference>
<dbReference type="InterPro" id="IPR002583">
    <property type="entry name" value="Ribosomal_bS20"/>
</dbReference>
<dbReference type="InterPro" id="IPR036510">
    <property type="entry name" value="Ribosomal_bS20_sf"/>
</dbReference>
<dbReference type="NCBIfam" id="TIGR00029">
    <property type="entry name" value="S20"/>
    <property type="match status" value="1"/>
</dbReference>
<dbReference type="PANTHER" id="PTHR33398">
    <property type="entry name" value="30S RIBOSOMAL PROTEIN S20"/>
    <property type="match status" value="1"/>
</dbReference>
<dbReference type="PANTHER" id="PTHR33398:SF1">
    <property type="entry name" value="SMALL RIBOSOMAL SUBUNIT PROTEIN BS20C"/>
    <property type="match status" value="1"/>
</dbReference>
<dbReference type="Pfam" id="PF01649">
    <property type="entry name" value="Ribosomal_S20p"/>
    <property type="match status" value="1"/>
</dbReference>
<dbReference type="SUPFAM" id="SSF46992">
    <property type="entry name" value="Ribosomal protein S20"/>
    <property type="match status" value="1"/>
</dbReference>
<feature type="chain" id="PRO_0000167955" description="Small ribosomal subunit protein bS20">
    <location>
        <begin position="1"/>
        <end position="92"/>
    </location>
</feature>
<feature type="region of interest" description="Disordered" evidence="2">
    <location>
        <begin position="1"/>
        <end position="25"/>
    </location>
</feature>
<feature type="region of interest" description="Disordered" evidence="2">
    <location>
        <begin position="68"/>
        <end position="92"/>
    </location>
</feature>
<feature type="compositionally biased region" description="Low complexity" evidence="2">
    <location>
        <begin position="80"/>
        <end position="92"/>
    </location>
</feature>
<comment type="function">
    <text evidence="1">Binds directly to 16S ribosomal RNA.</text>
</comment>
<comment type="similarity">
    <text evidence="1">Belongs to the bacterial ribosomal protein bS20 family.</text>
</comment>
<proteinExistence type="inferred from homology"/>
<protein>
    <recommendedName>
        <fullName evidence="1">Small ribosomal subunit protein bS20</fullName>
    </recommendedName>
    <alternativeName>
        <fullName evidence="3">30S ribosomal protein S20</fullName>
    </alternativeName>
</protein>
<gene>
    <name evidence="1" type="primary">rpsT</name>
    <name type="ordered locus">DR_1309</name>
</gene>
<name>RS20_DEIRA</name>